<reference key="1">
    <citation type="journal article" date="2007" name="PLoS ONE">
        <title>Evidence for positive selection in the C-terminal domain of the cholesterol metabolism gene PCSK9 based on phylogenetic analysis in 14 primate species.</title>
        <authorList>
            <person name="Ding K."/>
            <person name="McDonough S.J."/>
            <person name="Kullo I.J."/>
        </authorList>
    </citation>
    <scope>NUCLEOTIDE SEQUENCE [MRNA]</scope>
</reference>
<accession>A8T682</accession>
<name>PCSK9_SAGLB</name>
<dbReference type="EC" id="3.4.21.-"/>
<dbReference type="EMBL" id="EF692505">
    <property type="protein sequence ID" value="ABV59225.1"/>
    <property type="molecule type" value="mRNA"/>
</dbReference>
<dbReference type="SMR" id="A8T682"/>
<dbReference type="GlyCosmos" id="A8T682">
    <property type="glycosylation" value="1 site, No reported glycans"/>
</dbReference>
<dbReference type="GO" id="GO:0009986">
    <property type="term" value="C:cell surface"/>
    <property type="evidence" value="ECO:0000250"/>
    <property type="project" value="UniProtKB"/>
</dbReference>
<dbReference type="GO" id="GO:0005737">
    <property type="term" value="C:cytoplasm"/>
    <property type="evidence" value="ECO:0000250"/>
    <property type="project" value="UniProtKB"/>
</dbReference>
<dbReference type="GO" id="GO:0005769">
    <property type="term" value="C:early endosome"/>
    <property type="evidence" value="ECO:0000250"/>
    <property type="project" value="UniProtKB"/>
</dbReference>
<dbReference type="GO" id="GO:0005783">
    <property type="term" value="C:endoplasmic reticulum"/>
    <property type="evidence" value="ECO:0000250"/>
    <property type="project" value="UniProtKB"/>
</dbReference>
<dbReference type="GO" id="GO:0005615">
    <property type="term" value="C:extracellular space"/>
    <property type="evidence" value="ECO:0007669"/>
    <property type="project" value="TreeGrafter"/>
</dbReference>
<dbReference type="GO" id="GO:0005794">
    <property type="term" value="C:Golgi apparatus"/>
    <property type="evidence" value="ECO:0000250"/>
    <property type="project" value="UniProtKB"/>
</dbReference>
<dbReference type="GO" id="GO:0005770">
    <property type="term" value="C:late endosome"/>
    <property type="evidence" value="ECO:0000250"/>
    <property type="project" value="UniProtKB"/>
</dbReference>
<dbReference type="GO" id="GO:0005764">
    <property type="term" value="C:lysosome"/>
    <property type="evidence" value="ECO:0000250"/>
    <property type="project" value="UniProtKB"/>
</dbReference>
<dbReference type="GO" id="GO:0034185">
    <property type="term" value="F:apolipoprotein binding"/>
    <property type="evidence" value="ECO:0000250"/>
    <property type="project" value="UniProtKB"/>
</dbReference>
<dbReference type="GO" id="GO:0030169">
    <property type="term" value="F:low-density lipoprotein particle binding"/>
    <property type="evidence" value="ECO:0000250"/>
    <property type="project" value="UniProtKB"/>
</dbReference>
<dbReference type="GO" id="GO:0004252">
    <property type="term" value="F:serine-type endopeptidase activity"/>
    <property type="evidence" value="ECO:0007669"/>
    <property type="project" value="InterPro"/>
</dbReference>
<dbReference type="GO" id="GO:0034189">
    <property type="term" value="F:very-low-density lipoprotein particle binding"/>
    <property type="evidence" value="ECO:0000250"/>
    <property type="project" value="UniProtKB"/>
</dbReference>
<dbReference type="GO" id="GO:0006915">
    <property type="term" value="P:apoptotic process"/>
    <property type="evidence" value="ECO:0007669"/>
    <property type="project" value="UniProtKB-KW"/>
</dbReference>
<dbReference type="GO" id="GO:0008203">
    <property type="term" value="P:cholesterol metabolic process"/>
    <property type="evidence" value="ECO:0007669"/>
    <property type="project" value="UniProtKB-KW"/>
</dbReference>
<dbReference type="GO" id="GO:0032802">
    <property type="term" value="P:low-density lipoprotein particle receptor catabolic process"/>
    <property type="evidence" value="ECO:0000250"/>
    <property type="project" value="UniProtKB"/>
</dbReference>
<dbReference type="GO" id="GO:0006508">
    <property type="term" value="P:proteolysis"/>
    <property type="evidence" value="ECO:0007669"/>
    <property type="project" value="UniProtKB-KW"/>
</dbReference>
<dbReference type="GO" id="GO:0043523">
    <property type="term" value="P:regulation of neuron apoptotic process"/>
    <property type="evidence" value="ECO:0000250"/>
    <property type="project" value="UniProtKB"/>
</dbReference>
<dbReference type="CDD" id="cd16839">
    <property type="entry name" value="PCSK9_C-CRD"/>
    <property type="match status" value="1"/>
</dbReference>
<dbReference type="CDD" id="cd04077">
    <property type="entry name" value="Peptidases_S8_PCSK9_ProteinaseK_like"/>
    <property type="match status" value="1"/>
</dbReference>
<dbReference type="FunFam" id="2.60.120.690:FF:000001">
    <property type="entry name" value="Proprotein convertase subtilisin/kexin type 9"/>
    <property type="match status" value="1"/>
</dbReference>
<dbReference type="FunFam" id="3.30.70.80:FF:000004">
    <property type="entry name" value="Proprotein convertase subtilisin/kexin type 9"/>
    <property type="match status" value="1"/>
</dbReference>
<dbReference type="FunFam" id="3.40.50.200:FF:000016">
    <property type="entry name" value="Proprotein convertase subtilisin/kexin type 9"/>
    <property type="match status" value="1"/>
</dbReference>
<dbReference type="Gene3D" id="3.30.70.80">
    <property type="entry name" value="Peptidase S8 propeptide/proteinase inhibitor I9"/>
    <property type="match status" value="1"/>
</dbReference>
<dbReference type="Gene3D" id="3.40.50.200">
    <property type="entry name" value="Peptidase S8/S53 domain"/>
    <property type="match status" value="1"/>
</dbReference>
<dbReference type="Gene3D" id="2.60.120.690">
    <property type="entry name" value="Proprotein convertase subtilisin/kexin type 9"/>
    <property type="match status" value="1"/>
</dbReference>
<dbReference type="InterPro" id="IPR041254">
    <property type="entry name" value="PCSK9_C1"/>
</dbReference>
<dbReference type="InterPro" id="IPR041052">
    <property type="entry name" value="PCSK9_C2"/>
</dbReference>
<dbReference type="InterPro" id="IPR041051">
    <property type="entry name" value="PCSK9_C3"/>
</dbReference>
<dbReference type="InterPro" id="IPR034193">
    <property type="entry name" value="PCSK9_ProteinaseK-like"/>
</dbReference>
<dbReference type="InterPro" id="IPR000209">
    <property type="entry name" value="Peptidase_S8/S53_dom"/>
</dbReference>
<dbReference type="InterPro" id="IPR036852">
    <property type="entry name" value="Peptidase_S8/S53_dom_sf"/>
</dbReference>
<dbReference type="InterPro" id="IPR050131">
    <property type="entry name" value="Peptidase_S8_subtilisin-like"/>
</dbReference>
<dbReference type="InterPro" id="IPR015500">
    <property type="entry name" value="Peptidase_S8_subtilisin-rel"/>
</dbReference>
<dbReference type="InterPro" id="IPR010259">
    <property type="entry name" value="S8pro/Inhibitor_I9"/>
</dbReference>
<dbReference type="InterPro" id="IPR037045">
    <property type="entry name" value="S8pro/Inhibitor_I9_sf"/>
</dbReference>
<dbReference type="PANTHER" id="PTHR43806">
    <property type="entry name" value="PEPTIDASE S8"/>
    <property type="match status" value="1"/>
</dbReference>
<dbReference type="PANTHER" id="PTHR43806:SF60">
    <property type="entry name" value="PROPROTEIN CONVERTASE SUBTILISIN_KEXIN TYPE 9"/>
    <property type="match status" value="1"/>
</dbReference>
<dbReference type="Pfam" id="PF05922">
    <property type="entry name" value="Inhibitor_I9"/>
    <property type="match status" value="1"/>
</dbReference>
<dbReference type="Pfam" id="PF18459">
    <property type="entry name" value="PCSK9_C1"/>
    <property type="match status" value="1"/>
</dbReference>
<dbReference type="Pfam" id="PF18464">
    <property type="entry name" value="PCSK9_C2"/>
    <property type="match status" value="1"/>
</dbReference>
<dbReference type="Pfam" id="PF18463">
    <property type="entry name" value="PCSK9_C3"/>
    <property type="match status" value="1"/>
</dbReference>
<dbReference type="Pfam" id="PF00082">
    <property type="entry name" value="Peptidase_S8"/>
    <property type="match status" value="1"/>
</dbReference>
<dbReference type="PRINTS" id="PR00723">
    <property type="entry name" value="SUBTILISIN"/>
</dbReference>
<dbReference type="SUPFAM" id="SSF54897">
    <property type="entry name" value="Protease propeptides/inhibitors"/>
    <property type="match status" value="1"/>
</dbReference>
<dbReference type="SUPFAM" id="SSF52743">
    <property type="entry name" value="Subtilisin-like"/>
    <property type="match status" value="1"/>
</dbReference>
<dbReference type="PROSITE" id="PS51892">
    <property type="entry name" value="SUBTILASE"/>
    <property type="match status" value="1"/>
</dbReference>
<protein>
    <recommendedName>
        <fullName>Proprotein convertase subtilisin/kexin type 9</fullName>
        <ecNumber>3.4.21.-</ecNumber>
    </recommendedName>
    <alternativeName>
        <fullName>Proprotein convertase 9</fullName>
        <shortName>PC9</shortName>
    </alternativeName>
    <alternativeName>
        <fullName>Subtilisin/kexin-like protease PC9</fullName>
    </alternativeName>
</protein>
<gene>
    <name type="primary">PCSK9</name>
</gene>
<sequence>MGTVSSRRLWWPLPLLLLLLLGPAGTRAQEDDDDDYEELVLALRSEEEGLADALQNGATATFHRCAKDPWRLPGTYVVVLKEETHRSQPERTARRLQAQAARRGYLIKLLHVFHDLLPGFLVKMSRDLLELALRLPHVDYIEEDSSVFAQSIPWNLERITPARYQADEYQPPNGGSLVEVYLLDTSIQSGHREIEGRVMVTDFGSVPKEDGTRFHRQASKCDSHGTHLAGVVSGRDAGVAKGASLHSLRVLNCQGKGTVSSTLIGLEFICKSQLVQPVGPLVVLLPLAGGYSRVLNAACQRLARARVVLVAAAGNFRDDACLYSPASAPEVITVGATNAQDQPVTLGTLGTNFGRCVDLFAPGEDIIGASSDCSTCFVSRSGTSQAAAHVAGIAAMMLSAEPELTLAELRQRLIHFSAKDVINEAWFPEDQRVLTPNLVAALPPSTHGEGWQLFCRTVWSAHSGPTRMATAMARCAPDEELLSCSSFSRSGKRRGERIEAQGGRRVCLAHNAFGGEGVYAIARCCLLPQANCSVHTAPPAGAGMGTRAHCHQQGHILTGCSSHWEVEDLGTHKPPVLRPEGQHNQCMGHRGASTHASCCHAPGLECKVKEHGLPAPQEQVTVTCEEGWTLTGCSALPGTSHVLGAYAVDDTCVVRSRDVSTTGSTSEETVAAIAICCRSQHLAQAS</sequence>
<evidence type="ECO:0000250" key="1"/>
<evidence type="ECO:0000250" key="2">
    <source>
        <dbReference type="UniProtKB" id="Q8NBP7"/>
    </source>
</evidence>
<evidence type="ECO:0000255" key="3"/>
<evidence type="ECO:0000255" key="4">
    <source>
        <dbReference type="PROSITE-ProRule" id="PRU01240"/>
    </source>
</evidence>
<evidence type="ECO:0000305" key="5"/>
<comment type="function">
    <text evidence="1">Crucial player in the regulation of plasma cholesterol homeostasis. Binds to low-density lipid receptor family members: low density lipoprotein receptor (LDLR), very low density lipoprotein receptor (VLDLR), apolipoprotein E receptor (LRP1/APOER) and apolipoprotein receptor 2 (LRP8/APOER2), and promotes their degradation in intracellular acidic compartments. Acts via a non-proteolytic mechanism to enhance the degradation of the hepatic LDLR through a clathrin LDLRAP1/ARH-mediated pathway. May prevent the recycling of LDLR from endosomes to the cell surface or direct it to lysosomes for degradation. Can induce ubiquitination of LDLR leading to its subsequent degradation. Inhibits intracellular degradation of APOB via the autophagosome/lysosome pathway in a LDLR-independent manner. Involved in the disposal of non-acetylated intermediates of BACE1 in the early secretory pathway. Inhibits epithelial Na(+) channel (ENaC)-mediated Na(+) absorption by reducing ENaC surface expression primarily by increasing its proteasomal degradation. Regulates neuronal apoptosis via modulation of LRP8/APOER2 levels and related anti-apoptotic signaling pathways (By similarity).</text>
</comment>
<comment type="cofactor">
    <cofactor evidence="1">
        <name>Ca(2+)</name>
        <dbReference type="ChEBI" id="CHEBI:29108"/>
    </cofactor>
</comment>
<comment type="activity regulation">
    <text evidence="1">Its proteolytic activity is autoinhibited by the non-covalent binding of the propeptide to the catalytic domain. Inhibited by EGTA (By similarity).</text>
</comment>
<comment type="subunit">
    <text evidence="2">Monomer. Can self-associate to form dimers and higher multimers which may have increased LDLR degrading activity. The precursor protein but not the mature protein may form multimers. Interacts with APOB, VLDLR, LRP8/APOER2 and BACE1. The full-length immature form (pro-PCSK9) interacts with SCNN1A, SCNN1B and SCNN1G. The pro-PCSK9 form (via C-terminal domain) interacts with LDLR. Interacts (via the C-terminal domain) with ANXA2 (via repeat Annexin 1); the interaction inhibits the degradation of LDLR.</text>
</comment>
<comment type="subcellular location">
    <subcellularLocation>
        <location evidence="1">Cytoplasm</location>
    </subcellularLocation>
    <subcellularLocation>
        <location evidence="1">Secreted</location>
    </subcellularLocation>
    <subcellularLocation>
        <location evidence="1">Endosome</location>
    </subcellularLocation>
    <subcellularLocation>
        <location evidence="1">Lysosome</location>
    </subcellularLocation>
    <subcellularLocation>
        <location evidence="1">Cell surface</location>
    </subcellularLocation>
    <subcellularLocation>
        <location evidence="1">Endoplasmic reticulum</location>
    </subcellularLocation>
    <subcellularLocation>
        <location evidence="1">Golgi apparatus</location>
    </subcellularLocation>
    <text evidence="1">Autocatalytic cleavage is required to transport it from the endoplasmic reticulum to the Golgi apparatus and for the secretion of the mature protein. Localizes to the endoplasmic reticulum in the absence of LDLR and colocalizes to the cell surface and to the endosomes/lysosomes in the presence of LDLR. The sorting to the cell surface and endosomes is required in order to fully promote LDLR degradation (By similarity).</text>
</comment>
<comment type="domain">
    <text evidence="1">The C-terminal domain (CRD) is essential for the LDLR-binding and degrading activities.</text>
</comment>
<comment type="domain">
    <text evidence="1">The catalytic domain is responsible for mediating its self-association.</text>
</comment>
<comment type="PTM">
    <text evidence="1">Cleavage by furin and PCSK5 generates a truncated inactive protein that is unable to induce LDLR degradation.</text>
</comment>
<comment type="PTM">
    <text evidence="1">Undergoes autocatalytic cleavage in the endoplasmic reticulum to release the propeptide from the N-terminus and the cleavage of the propeptide is strictly required for its maturation and activation. The cleaved propeptide however remains associated with the catalytic domain through non-covalent interactions, preventing potential substrates from accessing its active site. As a result, it is secreted from cells as a propeptide-containing, enzymatically inactive protein (By similarity).</text>
</comment>
<comment type="PTM">
    <text evidence="1">Phosphorylation protects the propeptide against proteolysis.</text>
</comment>
<comment type="similarity">
    <text evidence="5">Belongs to the peptidase S8 family.</text>
</comment>
<organism>
    <name type="scientific">Saguinus labiatus</name>
    <name type="common">Red-chested mustached tamarin</name>
    <dbReference type="NCBI Taxonomy" id="78454"/>
    <lineage>
        <taxon>Eukaryota</taxon>
        <taxon>Metazoa</taxon>
        <taxon>Chordata</taxon>
        <taxon>Craniata</taxon>
        <taxon>Vertebrata</taxon>
        <taxon>Euteleostomi</taxon>
        <taxon>Mammalia</taxon>
        <taxon>Eutheria</taxon>
        <taxon>Euarchontoglires</taxon>
        <taxon>Primates</taxon>
        <taxon>Haplorrhini</taxon>
        <taxon>Platyrrhini</taxon>
        <taxon>Cebidae</taxon>
        <taxon>Callitrichinae</taxon>
        <taxon>Saguinus</taxon>
    </lineage>
</organism>
<feature type="signal peptide" evidence="1">
    <location>
        <begin position="1"/>
        <end position="28"/>
    </location>
</feature>
<feature type="propeptide" id="PRO_0000318294" evidence="1">
    <location>
        <begin position="29"/>
        <end position="150"/>
    </location>
</feature>
<feature type="chain" id="PRO_0000318295" description="Proprotein convertase subtilisin/kexin type 9">
    <location>
        <begin position="151"/>
        <end position="686"/>
    </location>
</feature>
<feature type="domain" description="Inhibitor I9" evidence="3">
    <location>
        <begin position="75"/>
        <end position="147"/>
    </location>
</feature>
<feature type="domain" description="Peptidase S8" evidence="4">
    <location>
        <begin position="153"/>
        <end position="459"/>
    </location>
</feature>
<feature type="region of interest" description="C-terminal domain" evidence="1">
    <location>
        <begin position="448"/>
        <end position="686"/>
    </location>
</feature>
<feature type="active site" description="Charge relay system" evidence="4">
    <location>
        <position position="184"/>
    </location>
</feature>
<feature type="active site" description="Charge relay system" evidence="4">
    <location>
        <position position="224"/>
    </location>
</feature>
<feature type="active site" description="Charge relay system" evidence="4">
    <location>
        <position position="384"/>
    </location>
</feature>
<feature type="site" description="Cleavage; by autolysis" evidence="1">
    <location>
        <begin position="150"/>
        <end position="151"/>
    </location>
</feature>
<feature type="site" description="Cleavage; by furin and PCSK5" evidence="1">
    <location>
        <begin position="216"/>
        <end position="217"/>
    </location>
</feature>
<feature type="modified residue" description="Sulfotyrosine" evidence="1">
    <location>
        <position position="36"/>
    </location>
</feature>
<feature type="modified residue" description="Phosphoserine" evidence="2">
    <location>
        <position position="45"/>
    </location>
</feature>
<feature type="modified residue" description="Phosphoserine" evidence="2">
    <location>
        <position position="686"/>
    </location>
</feature>
<feature type="glycosylation site" description="N-linked (GlcNAc...) asparagine" evidence="3">
    <location>
        <position position="531"/>
    </location>
</feature>
<feature type="disulfide bond" evidence="3">
    <location>
        <begin position="221"/>
        <end position="253"/>
    </location>
</feature>
<feature type="disulfide bond" evidence="3">
    <location>
        <begin position="321"/>
        <end position="356"/>
    </location>
</feature>
<feature type="disulfide bond" evidence="3">
    <location>
        <begin position="455"/>
        <end position="525"/>
    </location>
</feature>
<feature type="disulfide bond" evidence="3">
    <location>
        <begin position="475"/>
        <end position="524"/>
    </location>
</feature>
<feature type="disulfide bond" evidence="3">
    <location>
        <begin position="484"/>
        <end position="507"/>
    </location>
</feature>
<feature type="disulfide bond" evidence="3">
    <location>
        <begin position="532"/>
        <end position="599"/>
    </location>
</feature>
<feature type="disulfide bond" evidence="3">
    <location>
        <begin position="550"/>
        <end position="598"/>
    </location>
</feature>
<feature type="disulfide bond" evidence="3">
    <location>
        <begin position="560"/>
        <end position="586"/>
    </location>
</feature>
<feature type="disulfide bond" evidence="3">
    <location>
        <begin position="606"/>
        <end position="677"/>
    </location>
</feature>
<feature type="disulfide bond" evidence="3">
    <location>
        <begin position="624"/>
        <end position="676"/>
    </location>
</feature>
<feature type="disulfide bond" evidence="3">
    <location>
        <begin position="633"/>
        <end position="652"/>
    </location>
</feature>
<proteinExistence type="evidence at transcript level"/>
<keyword id="KW-0053">Apoptosis</keyword>
<keyword id="KW-0068">Autocatalytic cleavage</keyword>
<keyword id="KW-0106">Calcium</keyword>
<keyword id="KW-0153">Cholesterol metabolism</keyword>
<keyword id="KW-0963">Cytoplasm</keyword>
<keyword id="KW-1015">Disulfide bond</keyword>
<keyword id="KW-0256">Endoplasmic reticulum</keyword>
<keyword id="KW-0967">Endosome</keyword>
<keyword id="KW-0325">Glycoprotein</keyword>
<keyword id="KW-0333">Golgi apparatus</keyword>
<keyword id="KW-0378">Hydrolase</keyword>
<keyword id="KW-0443">Lipid metabolism</keyword>
<keyword id="KW-0458">Lysosome</keyword>
<keyword id="KW-0597">Phosphoprotein</keyword>
<keyword id="KW-0645">Protease</keyword>
<keyword id="KW-0964">Secreted</keyword>
<keyword id="KW-0720">Serine protease</keyword>
<keyword id="KW-0732">Signal</keyword>
<keyword id="KW-0753">Steroid metabolism</keyword>
<keyword id="KW-1207">Sterol metabolism</keyword>
<keyword id="KW-0765">Sulfation</keyword>
<keyword id="KW-0865">Zymogen</keyword>